<name>TFE2_MOUSE</name>
<dbReference type="EMBL" id="AF352579">
    <property type="protein sequence ID" value="AAK18618.1"/>
    <property type="molecule type" value="mRNA"/>
</dbReference>
<dbReference type="EMBL" id="AK017617">
    <property type="protein sequence ID" value="BAB30842.1"/>
    <property type="molecule type" value="mRNA"/>
</dbReference>
<dbReference type="EMBL" id="AK038738">
    <property type="protein sequence ID" value="BAC30118.1"/>
    <property type="molecule type" value="mRNA"/>
</dbReference>
<dbReference type="EMBL" id="AK156265">
    <property type="protein sequence ID" value="BAE33647.1"/>
    <property type="molecule type" value="mRNA"/>
</dbReference>
<dbReference type="EMBL" id="BC006860">
    <property type="protein sequence ID" value="AAH06860.1"/>
    <property type="molecule type" value="mRNA"/>
</dbReference>
<dbReference type="EMBL" id="BC018260">
    <property type="protein sequence ID" value="AAH18260.1"/>
    <property type="molecule type" value="mRNA"/>
</dbReference>
<dbReference type="EMBL" id="X17500">
    <property type="protein sequence ID" value="CAA35541.1"/>
    <property type="molecule type" value="mRNA"/>
</dbReference>
<dbReference type="EMBL" id="D16631">
    <property type="protein sequence ID" value="BAA04057.1"/>
    <property type="molecule type" value="mRNA"/>
</dbReference>
<dbReference type="EMBL" id="D16632">
    <property type="protein sequence ID" value="BAA04058.1"/>
    <property type="molecule type" value="mRNA"/>
</dbReference>
<dbReference type="EMBL" id="D16633">
    <property type="protein sequence ID" value="BAA04059.1"/>
    <property type="molecule type" value="mRNA"/>
</dbReference>
<dbReference type="EMBL" id="D16634">
    <property type="protein sequence ID" value="BAA04060.1"/>
    <property type="molecule type" value="mRNA"/>
</dbReference>
<dbReference type="EMBL" id="D16635">
    <property type="protein sequence ID" value="BAA04061.1"/>
    <property type="molecule type" value="mRNA"/>
</dbReference>
<dbReference type="EMBL" id="D16636">
    <property type="protein sequence ID" value="BAA04062.1"/>
    <property type="molecule type" value="mRNA"/>
</dbReference>
<dbReference type="EMBL" id="D16637">
    <property type="protein sequence ID" value="BAA04063.1"/>
    <property type="molecule type" value="mRNA"/>
</dbReference>
<dbReference type="EMBL" id="D16638">
    <property type="protein sequence ID" value="BAA04064.1"/>
    <property type="molecule type" value="mRNA"/>
</dbReference>
<dbReference type="EMBL" id="D29919">
    <property type="protein sequence ID" value="BAA06218.1"/>
    <property type="molecule type" value="mRNA"/>
</dbReference>
<dbReference type="CCDS" id="CCDS24022.1">
    <molecule id="P15806-2"/>
</dbReference>
<dbReference type="CCDS" id="CCDS48630.1">
    <molecule id="P15806-1"/>
</dbReference>
<dbReference type="PIR" id="S08410">
    <property type="entry name" value="S08410"/>
</dbReference>
<dbReference type="RefSeq" id="NP_001157620.1">
    <property type="nucleotide sequence ID" value="NM_001164148.1"/>
</dbReference>
<dbReference type="RefSeq" id="NP_001157621.1">
    <molecule id="P15806-1"/>
    <property type="nucleotide sequence ID" value="NM_001164149.2"/>
</dbReference>
<dbReference type="RefSeq" id="NP_001157623.1">
    <property type="nucleotide sequence ID" value="NM_001164151.1"/>
</dbReference>
<dbReference type="RefSeq" id="NP_035678.3">
    <molecule id="P15806-2"/>
    <property type="nucleotide sequence ID" value="NM_011548.4"/>
</dbReference>
<dbReference type="PDB" id="2QL2">
    <property type="method" value="X-ray"/>
    <property type="resolution" value="2.50 A"/>
    <property type="chains" value="A/C=547-606"/>
</dbReference>
<dbReference type="PDB" id="7WZ6">
    <property type="method" value="X-ray"/>
    <property type="resolution" value="2.05 A"/>
    <property type="chains" value="A=547-609"/>
</dbReference>
<dbReference type="PDBsum" id="2QL2"/>
<dbReference type="PDBsum" id="7WZ6"/>
<dbReference type="SMR" id="P15806"/>
<dbReference type="BioGRID" id="204015">
    <property type="interactions" value="103"/>
</dbReference>
<dbReference type="CORUM" id="P15806"/>
<dbReference type="DIP" id="DIP-30940N"/>
<dbReference type="FunCoup" id="P15806">
    <property type="interactions" value="2307"/>
</dbReference>
<dbReference type="IntAct" id="P15806">
    <property type="interactions" value="45"/>
</dbReference>
<dbReference type="MINT" id="P15806"/>
<dbReference type="STRING" id="10090.ENSMUSP00000100979"/>
<dbReference type="iPTMnet" id="P15806"/>
<dbReference type="PhosphoSitePlus" id="P15806"/>
<dbReference type="jPOST" id="P15806"/>
<dbReference type="PaxDb" id="10090-ENSMUSP00000100979"/>
<dbReference type="ProteomicsDB" id="262797">
    <molecule id="P15806-1"/>
</dbReference>
<dbReference type="ProteomicsDB" id="262798">
    <molecule id="P15806-2"/>
</dbReference>
<dbReference type="Pumba" id="P15806"/>
<dbReference type="Antibodypedia" id="4332">
    <property type="antibodies" value="584 antibodies from 45 providers"/>
</dbReference>
<dbReference type="DNASU" id="21423"/>
<dbReference type="Ensembl" id="ENSMUST00000105345.10">
    <molecule id="P15806-2"/>
    <property type="protein sequence ID" value="ENSMUSP00000100982.4"/>
    <property type="gene ID" value="ENSMUSG00000020167.15"/>
</dbReference>
<dbReference type="Ensembl" id="ENSMUST00000105346.10">
    <molecule id="P15806-1"/>
    <property type="protein sequence ID" value="ENSMUSP00000100983.4"/>
    <property type="gene ID" value="ENSMUSG00000020167.15"/>
</dbReference>
<dbReference type="GeneID" id="21423"/>
<dbReference type="KEGG" id="mmu:21423"/>
<dbReference type="UCSC" id="uc007gdg.2">
    <molecule id="P15806-2"/>
    <property type="organism name" value="mouse"/>
</dbReference>
<dbReference type="UCSC" id="uc007gdi.2">
    <molecule id="P15806-1"/>
    <property type="organism name" value="mouse"/>
</dbReference>
<dbReference type="AGR" id="MGI:98510"/>
<dbReference type="CTD" id="6929"/>
<dbReference type="MGI" id="MGI:98510">
    <property type="gene designation" value="Tcf3"/>
</dbReference>
<dbReference type="VEuPathDB" id="HostDB:ENSMUSG00000020167"/>
<dbReference type="eggNOG" id="KOG3910">
    <property type="taxonomic scope" value="Eukaryota"/>
</dbReference>
<dbReference type="GeneTree" id="ENSGT00940000157036"/>
<dbReference type="InParanoid" id="P15806"/>
<dbReference type="OrthoDB" id="10034090at2759"/>
<dbReference type="PhylomeDB" id="P15806"/>
<dbReference type="Reactome" id="R-MMU-525793">
    <property type="pathway name" value="Myogenesis"/>
</dbReference>
<dbReference type="Reactome" id="R-MMU-8939236">
    <property type="pathway name" value="RUNX1 regulates transcription of genes involved in differentiation of HSCs"/>
</dbReference>
<dbReference type="BioGRID-ORCS" id="21423">
    <property type="hits" value="5 hits in 82 CRISPR screens"/>
</dbReference>
<dbReference type="ChiTaRS" id="Tcf3">
    <property type="organism name" value="mouse"/>
</dbReference>
<dbReference type="EvolutionaryTrace" id="P15806"/>
<dbReference type="PRO" id="PR:P15806"/>
<dbReference type="Proteomes" id="UP000000589">
    <property type="component" value="Chromosome 10"/>
</dbReference>
<dbReference type="RNAct" id="P15806">
    <property type="molecule type" value="protein"/>
</dbReference>
<dbReference type="Bgee" id="ENSMUSG00000020167">
    <property type="expression patterns" value="Expressed in ventricular zone and 253 other cell types or tissues"/>
</dbReference>
<dbReference type="ExpressionAtlas" id="P15806">
    <property type="expression patterns" value="baseline and differential"/>
</dbReference>
<dbReference type="GO" id="GO:0005737">
    <property type="term" value="C:cytoplasm"/>
    <property type="evidence" value="ECO:0000250"/>
    <property type="project" value="UniProtKB"/>
</dbReference>
<dbReference type="GO" id="GO:0005829">
    <property type="term" value="C:cytosol"/>
    <property type="evidence" value="ECO:0000314"/>
    <property type="project" value="MGI"/>
</dbReference>
<dbReference type="GO" id="GO:0005654">
    <property type="term" value="C:nucleoplasm"/>
    <property type="evidence" value="ECO:0000304"/>
    <property type="project" value="Reactome"/>
</dbReference>
<dbReference type="GO" id="GO:0000786">
    <property type="term" value="C:nucleosome"/>
    <property type="evidence" value="ECO:0000314"/>
    <property type="project" value="MGI"/>
</dbReference>
<dbReference type="GO" id="GO:0005634">
    <property type="term" value="C:nucleus"/>
    <property type="evidence" value="ECO:0000314"/>
    <property type="project" value="MGI"/>
</dbReference>
<dbReference type="GO" id="GO:0032991">
    <property type="term" value="C:protein-containing complex"/>
    <property type="evidence" value="ECO:0000250"/>
    <property type="project" value="UniProtKB"/>
</dbReference>
<dbReference type="GO" id="GO:0090575">
    <property type="term" value="C:RNA polymerase II transcription regulator complex"/>
    <property type="evidence" value="ECO:0000314"/>
    <property type="project" value="NTNU_SB"/>
</dbReference>
<dbReference type="GO" id="GO:0005667">
    <property type="term" value="C:transcription regulator complex"/>
    <property type="evidence" value="ECO:0000314"/>
    <property type="project" value="BHF-UCL"/>
</dbReference>
<dbReference type="GO" id="GO:0043425">
    <property type="term" value="F:bHLH transcription factor binding"/>
    <property type="evidence" value="ECO:0000353"/>
    <property type="project" value="UniProtKB"/>
</dbReference>
<dbReference type="GO" id="GO:0003682">
    <property type="term" value="F:chromatin binding"/>
    <property type="evidence" value="ECO:0000314"/>
    <property type="project" value="MGI"/>
</dbReference>
<dbReference type="GO" id="GO:0000987">
    <property type="term" value="F:cis-regulatory region sequence-specific DNA binding"/>
    <property type="evidence" value="ECO:0000314"/>
    <property type="project" value="MGI"/>
</dbReference>
<dbReference type="GO" id="GO:0003677">
    <property type="term" value="F:DNA binding"/>
    <property type="evidence" value="ECO:0000250"/>
    <property type="project" value="UniProtKB"/>
</dbReference>
<dbReference type="GO" id="GO:0001228">
    <property type="term" value="F:DNA-binding transcription activator activity, RNA polymerase II-specific"/>
    <property type="evidence" value="ECO:0000314"/>
    <property type="project" value="BHF-UCL"/>
</dbReference>
<dbReference type="GO" id="GO:0003700">
    <property type="term" value="F:DNA-binding transcription factor activity"/>
    <property type="evidence" value="ECO:0000314"/>
    <property type="project" value="MGI"/>
</dbReference>
<dbReference type="GO" id="GO:0000981">
    <property type="term" value="F:DNA-binding transcription factor activity, RNA polymerase II-specific"/>
    <property type="evidence" value="ECO:0000314"/>
    <property type="project" value="UniProtKB"/>
</dbReference>
<dbReference type="GO" id="GO:0140297">
    <property type="term" value="F:DNA-binding transcription factor binding"/>
    <property type="evidence" value="ECO:0000250"/>
    <property type="project" value="UniProtKB"/>
</dbReference>
<dbReference type="GO" id="GO:0070888">
    <property type="term" value="F:E-box binding"/>
    <property type="evidence" value="ECO:0000314"/>
    <property type="project" value="UniProtKB"/>
</dbReference>
<dbReference type="GO" id="GO:0042802">
    <property type="term" value="F:identical protein binding"/>
    <property type="evidence" value="ECO:0000353"/>
    <property type="project" value="MGI"/>
</dbReference>
<dbReference type="GO" id="GO:0046982">
    <property type="term" value="F:protein heterodimerization activity"/>
    <property type="evidence" value="ECO:0000314"/>
    <property type="project" value="UniProtKB"/>
</dbReference>
<dbReference type="GO" id="GO:0042803">
    <property type="term" value="F:protein homodimerization activity"/>
    <property type="evidence" value="ECO:0000250"/>
    <property type="project" value="UniProtKB"/>
</dbReference>
<dbReference type="GO" id="GO:0000978">
    <property type="term" value="F:RNA polymerase II cis-regulatory region sequence-specific DNA binding"/>
    <property type="evidence" value="ECO:0000314"/>
    <property type="project" value="NTNU_SB"/>
</dbReference>
<dbReference type="GO" id="GO:0061629">
    <property type="term" value="F:RNA polymerase II-specific DNA-binding transcription factor binding"/>
    <property type="evidence" value="ECO:0000353"/>
    <property type="project" value="BHF-UCL"/>
</dbReference>
<dbReference type="GO" id="GO:0043565">
    <property type="term" value="F:sequence-specific DNA binding"/>
    <property type="evidence" value="ECO:0000314"/>
    <property type="project" value="MGI"/>
</dbReference>
<dbReference type="GO" id="GO:0002326">
    <property type="term" value="P:B cell lineage commitment"/>
    <property type="evidence" value="ECO:0000250"/>
    <property type="project" value="UniProtKB"/>
</dbReference>
<dbReference type="GO" id="GO:0048468">
    <property type="term" value="P:cell development"/>
    <property type="evidence" value="ECO:0000316"/>
    <property type="project" value="MGI"/>
</dbReference>
<dbReference type="GO" id="GO:0006338">
    <property type="term" value="P:chromatin remodeling"/>
    <property type="evidence" value="ECO:0000315"/>
    <property type="project" value="MGI"/>
</dbReference>
<dbReference type="GO" id="GO:0030218">
    <property type="term" value="P:erythrocyte differentiation"/>
    <property type="evidence" value="ECO:0000304"/>
    <property type="project" value="MGI"/>
</dbReference>
<dbReference type="GO" id="GO:0007369">
    <property type="term" value="P:gastrulation"/>
    <property type="evidence" value="ECO:0000316"/>
    <property type="project" value="BHF-UCL"/>
</dbReference>
<dbReference type="GO" id="GO:0010467">
    <property type="term" value="P:gene expression"/>
    <property type="evidence" value="ECO:0000315"/>
    <property type="project" value="MGI"/>
</dbReference>
<dbReference type="GO" id="GO:0033152">
    <property type="term" value="P:immunoglobulin V(D)J recombination"/>
    <property type="evidence" value="ECO:0000315"/>
    <property type="project" value="MGI"/>
</dbReference>
<dbReference type="GO" id="GO:0030098">
    <property type="term" value="P:lymphocyte differentiation"/>
    <property type="evidence" value="ECO:0000315"/>
    <property type="project" value="MGI"/>
</dbReference>
<dbReference type="GO" id="GO:0001779">
    <property type="term" value="P:natural killer cell differentiation"/>
    <property type="evidence" value="ECO:0000316"/>
    <property type="project" value="MGI"/>
</dbReference>
<dbReference type="GO" id="GO:0007399">
    <property type="term" value="P:nervous system development"/>
    <property type="evidence" value="ECO:0007669"/>
    <property type="project" value="UniProtKB-KW"/>
</dbReference>
<dbReference type="GO" id="GO:0048541">
    <property type="term" value="P:Peyer's patch development"/>
    <property type="evidence" value="ECO:0000316"/>
    <property type="project" value="MGI"/>
</dbReference>
<dbReference type="GO" id="GO:0030890">
    <property type="term" value="P:positive regulation of B cell proliferation"/>
    <property type="evidence" value="ECO:0000250"/>
    <property type="project" value="UniProtKB"/>
</dbReference>
<dbReference type="GO" id="GO:0045787">
    <property type="term" value="P:positive regulation of cell cycle"/>
    <property type="evidence" value="ECO:0000250"/>
    <property type="project" value="UniProtKB"/>
</dbReference>
<dbReference type="GO" id="GO:0051091">
    <property type="term" value="P:positive regulation of DNA-binding transcription factor activity"/>
    <property type="evidence" value="ECO:0000250"/>
    <property type="project" value="UniProtKB"/>
</dbReference>
<dbReference type="GO" id="GO:0045893">
    <property type="term" value="P:positive regulation of DNA-templated transcription"/>
    <property type="evidence" value="ECO:0000316"/>
    <property type="project" value="MGI"/>
</dbReference>
<dbReference type="GO" id="GO:0010628">
    <property type="term" value="P:positive regulation of gene expression"/>
    <property type="evidence" value="ECO:0000315"/>
    <property type="project" value="MGI"/>
</dbReference>
<dbReference type="GO" id="GO:0045666">
    <property type="term" value="P:positive regulation of neuron differentiation"/>
    <property type="evidence" value="ECO:0000314"/>
    <property type="project" value="UniProtKB"/>
</dbReference>
<dbReference type="GO" id="GO:0045944">
    <property type="term" value="P:positive regulation of transcription by RNA polymerase II"/>
    <property type="evidence" value="ECO:0000314"/>
    <property type="project" value="BHF-UCL"/>
</dbReference>
<dbReference type="GO" id="GO:0050821">
    <property type="term" value="P:protein stabilization"/>
    <property type="evidence" value="ECO:0000314"/>
    <property type="project" value="MGI"/>
</dbReference>
<dbReference type="GO" id="GO:0006355">
    <property type="term" value="P:regulation of DNA-templated transcription"/>
    <property type="evidence" value="ECO:0000314"/>
    <property type="project" value="MGI"/>
</dbReference>
<dbReference type="GO" id="GO:2000045">
    <property type="term" value="P:regulation of G1/S transition of mitotic cell cycle"/>
    <property type="evidence" value="ECO:0000250"/>
    <property type="project" value="UniProtKB"/>
</dbReference>
<dbReference type="GO" id="GO:0006357">
    <property type="term" value="P:regulation of transcription by RNA polymerase II"/>
    <property type="evidence" value="ECO:0000314"/>
    <property type="project" value="MGI"/>
</dbReference>
<dbReference type="GO" id="GO:0032496">
    <property type="term" value="P:response to lipopolysaccharide"/>
    <property type="evidence" value="ECO:0000315"/>
    <property type="project" value="MGI"/>
</dbReference>
<dbReference type="GO" id="GO:0009410">
    <property type="term" value="P:response to xenobiotic stimulus"/>
    <property type="evidence" value="ECO:0000315"/>
    <property type="project" value="MGI"/>
</dbReference>
<dbReference type="GO" id="GO:0033077">
    <property type="term" value="P:T cell differentiation in thymus"/>
    <property type="evidence" value="ECO:0000315"/>
    <property type="project" value="MGI"/>
</dbReference>
<dbReference type="GO" id="GO:0006366">
    <property type="term" value="P:transcription by RNA polymerase II"/>
    <property type="evidence" value="ECO:0000314"/>
    <property type="project" value="MGI"/>
</dbReference>
<dbReference type="CDD" id="cd18945">
    <property type="entry name" value="bHLH_E-protein_TCF4_E2-2"/>
    <property type="match status" value="1"/>
</dbReference>
<dbReference type="FunFam" id="4.10.280.10:FF:000001">
    <property type="entry name" value="Putative transcription factor 12"/>
    <property type="match status" value="1"/>
</dbReference>
<dbReference type="Gene3D" id="4.10.280.10">
    <property type="entry name" value="Helix-loop-helix DNA-binding domain"/>
    <property type="match status" value="1"/>
</dbReference>
<dbReference type="InterPro" id="IPR011598">
    <property type="entry name" value="bHLH_dom"/>
</dbReference>
<dbReference type="InterPro" id="IPR036638">
    <property type="entry name" value="HLH_DNA-bd_sf"/>
</dbReference>
<dbReference type="InterPro" id="IPR051098">
    <property type="entry name" value="NeuroDiff_E-box_TFs"/>
</dbReference>
<dbReference type="PANTHER" id="PTHR11793">
    <property type="entry name" value="BASIC HELIX-LOOP-HELIX TRANSCRIPTION FACTOR"/>
    <property type="match status" value="1"/>
</dbReference>
<dbReference type="PANTHER" id="PTHR11793:SF7">
    <property type="entry name" value="TRANSCRIPTION FACTOR E2-ALPHA"/>
    <property type="match status" value="1"/>
</dbReference>
<dbReference type="Pfam" id="PF00010">
    <property type="entry name" value="HLH"/>
    <property type="match status" value="1"/>
</dbReference>
<dbReference type="SMART" id="SM00353">
    <property type="entry name" value="HLH"/>
    <property type="match status" value="1"/>
</dbReference>
<dbReference type="SUPFAM" id="SSF47459">
    <property type="entry name" value="HLH, helix-loop-helix DNA-binding domain"/>
    <property type="match status" value="1"/>
</dbReference>
<dbReference type="PROSITE" id="PS50888">
    <property type="entry name" value="BHLH"/>
    <property type="match status" value="1"/>
</dbReference>
<feature type="chain" id="PRO_0000127468" description="Transcription factor E2-alpha">
    <location>
        <begin position="1"/>
        <end position="651"/>
    </location>
</feature>
<feature type="domain" description="bHLH" evidence="3">
    <location>
        <begin position="546"/>
        <end position="599"/>
    </location>
</feature>
<feature type="region of interest" description="Disordered" evidence="4">
    <location>
        <begin position="32"/>
        <end position="107"/>
    </location>
</feature>
<feature type="region of interest" description="Disordered" evidence="4">
    <location>
        <begin position="131"/>
        <end position="208"/>
    </location>
</feature>
<feature type="region of interest" description="Disordered" evidence="4">
    <location>
        <begin position="341"/>
        <end position="378"/>
    </location>
</feature>
<feature type="region of interest" description="Leucine-zipper">
    <location>
        <begin position="387"/>
        <end position="422"/>
    </location>
</feature>
<feature type="region of interest" description="Disordered" evidence="4">
    <location>
        <begin position="457"/>
        <end position="549"/>
    </location>
</feature>
<feature type="compositionally biased region" description="Low complexity" evidence="4">
    <location>
        <begin position="56"/>
        <end position="73"/>
    </location>
</feature>
<feature type="compositionally biased region" description="Low complexity" evidence="4">
    <location>
        <begin position="131"/>
        <end position="148"/>
    </location>
</feature>
<feature type="compositionally biased region" description="Low complexity" evidence="4">
    <location>
        <begin position="341"/>
        <end position="354"/>
    </location>
</feature>
<feature type="compositionally biased region" description="Low complexity" evidence="4">
    <location>
        <begin position="461"/>
        <end position="479"/>
    </location>
</feature>
<feature type="compositionally biased region" description="Basic and acidic residues" evidence="4">
    <location>
        <begin position="539"/>
        <end position="549"/>
    </location>
</feature>
<feature type="modified residue" description="Phosphoserine" evidence="2">
    <location>
        <position position="135"/>
    </location>
</feature>
<feature type="modified residue" description="Phosphoserine" evidence="2">
    <location>
        <position position="140"/>
    </location>
</feature>
<feature type="modified residue" description="Phosphothreonine" evidence="26">
    <location>
        <position position="353"/>
    </location>
</feature>
<feature type="modified residue" description="Phosphoserine" evidence="26">
    <location>
        <position position="357"/>
    </location>
</feature>
<feature type="modified residue" description="Omega-N-methylarginine" evidence="27">
    <location>
        <position position="369"/>
    </location>
</feature>
<feature type="modified residue" description="Phosphoserine" evidence="2">
    <location>
        <position position="377"/>
    </location>
</feature>
<feature type="modified residue" description="Phosphoserine" evidence="2">
    <location>
        <position position="526"/>
    </location>
</feature>
<feature type="cross-link" description="Glycyl lysine isopeptide (Lys-Gly) (interchain with G-Cter in SUMO2)" evidence="2">
    <location>
        <position position="496"/>
    </location>
</feature>
<feature type="cross-link" description="Glycyl lysine isopeptide (Lys-Gly) (interchain with G-Cter in SUMO2)" evidence="2">
    <location>
        <position position="622"/>
    </location>
</feature>
<feature type="splice variant" id="VSP_011354" description="In isoform E47." evidence="21 22 23 24">
    <original>PDEDEDDLLPPEQKAEREKERRVANNARERLRVRDINEAFKELGRMCQLHLSSEKPQTKLLILHQAVAVILS</original>
    <variation>STDEVLSLEEKDLRDRERRMANNARERVRVRDINEAFRELGRMCQLHLKSDKAQTKLLILQQAVQVILG</variation>
    <location>
        <begin position="527"/>
        <end position="598"/>
    </location>
</feature>
<feature type="sequence variant" evidence="19">
    <original>L</original>
    <variation>LQ</variation>
    <location>
        <position position="387"/>
    </location>
</feature>
<feature type="sequence conflict" description="In Ref. 1; AAK18618." evidence="25" ref="1">
    <original>S</original>
    <variation>N</variation>
    <location>
        <position position="156"/>
    </location>
</feature>
<feature type="sequence conflict" description="In Ref. 1; AAK18618." evidence="25" ref="1">
    <original>D</original>
    <variation>N</variation>
    <location>
        <position position="164"/>
    </location>
</feature>
<feature type="sequence conflict" description="In Ref. 3; AAH18260." evidence="25" ref="3">
    <original>L</original>
    <variation>LA</variation>
    <location>
        <position position="167"/>
    </location>
</feature>
<feature type="sequence conflict" description="In Ref. 2; BAB30842." evidence="25" ref="2">
    <original>P</original>
    <variation>T</variation>
    <location>
        <position position="294"/>
    </location>
</feature>
<feature type="sequence conflict" description="In Ref. 3; AAH06860." evidence="25" ref="3">
    <original>A</original>
    <variation>P</variation>
    <location>
        <position position="633"/>
    </location>
</feature>
<feature type="helix" evidence="28">
    <location>
        <begin position="547"/>
        <end position="577"/>
    </location>
</feature>
<feature type="helix" evidence="28">
    <location>
        <begin position="585"/>
        <end position="605"/>
    </location>
</feature>
<feature type="modified residue" description="Phosphothreonine" evidence="26">
    <location sequence="P15806-2">
        <position position="528"/>
    </location>
</feature>
<feature type="modified residue" description="Phosphoserine" evidence="26">
    <location sequence="P15806-2">
        <position position="533"/>
    </location>
</feature>
<protein>
    <recommendedName>
        <fullName>Transcription factor E2-alpha</fullName>
    </recommendedName>
    <alternativeName>
        <fullName>Immunoglobulin enhancer-binding factor E12/E47</fullName>
    </alternativeName>
    <alternativeName>
        <fullName>Transcription factor 3</fullName>
        <shortName>TCF-3</shortName>
    </alternativeName>
    <alternativeName>
        <fullName>Transcription factor A1</fullName>
    </alternativeName>
</protein>
<sequence length="651" mass="67701">MMNQSQRMAPVGSDKELSDLLDFSMMFPLPVANGKSRPASLGGTQFAGSGLEDRPSSGSWGSSDQNSSSFDPSRTYSEGAHFSDSHSSLPPSTFLGAGLGGKGSERNAYATFGRDTSVGTLSQAGFLPGELSLSSPGPLSPSGIKSSSQYYPSFPSNPRRRAADGGLDTQPKKVRKVPPGLPSSVYPPSSGDSYSRDAAAYPSAKTPSSAYPSPFYVADGSLHPSAELWSTPSQVGFGPMLGDGSSPLPLAPGSSSVGSGTFGGLQQQDRMGYQLHGSEVNGSLPAVSSFSAAPGTYSGTSGHTPPVSGAAAESLLGTRGTTASSSGDALGKALASIYSPDHSSNNFSPSPSTPVGSPQGLPGTSQWPRAGAPSALSPNYDAGLHGLSKMEDRLDEAIHVLRSHAVGTASDLHGLLPGHGALTTSFTGPMSLGGRHAGLVGGSHPEEGLTSGASLLHNHASLPSQPSSLPDLSQRPPDSYSGLGRAGTTAGASEIKREEKEDEEIASVADAEEDKKDLKVPRTRTSPDEDEDDLLPPEQKAEREKERRVANNARERLRVRDINEAFKELGRMCQLHLSSEKPQTKLLILHQAVAVILSLEQQVRERNLNPKAACLKRREEEKVSGVVGDPQLALSAAHPGLGEAHNPAGHL</sequence>
<keyword id="KW-0002">3D-structure</keyword>
<keyword id="KW-0025">Alternative splicing</keyword>
<keyword id="KW-0221">Differentiation</keyword>
<keyword id="KW-0238">DNA-binding</keyword>
<keyword id="KW-1017">Isopeptide bond</keyword>
<keyword id="KW-0488">Methylation</keyword>
<keyword id="KW-0524">Neurogenesis</keyword>
<keyword id="KW-0539">Nucleus</keyword>
<keyword id="KW-0597">Phosphoprotein</keyword>
<keyword id="KW-1185">Reference proteome</keyword>
<keyword id="KW-0804">Transcription</keyword>
<keyword id="KW-0805">Transcription regulation</keyword>
<keyword id="KW-0832">Ubl conjugation</keyword>
<comment type="function">
    <text evidence="2 5 9 13 14">Transcriptional regulator involved in the initiation of neuronal differentiation and mesenchymal to epithelial transition (PubMed:15226298, PubMed:18214987). Heterodimers between TCF3 and tissue-specific basic helix-loop-helix (bHLH) proteins play major roles in determining tissue-specific cell fate during embryogenesis, like muscle or early B-cell differentiation (PubMed:18214987). Together with TCF15, required for the mesenchymal to epithelial transition (PubMed:11309385, PubMed:15226298). Dimers bind DNA on E-box motifs: 5'-CANNTG-3' (PubMed:15226298, PubMed:18214987, PubMed:30426815). Binds to the kappa-E2 site in the kappa immunoglobulin gene enhancer (By similarity). Binds to IEB1 and IEB2, which are short DNA sequences in the insulin gene transcription control region (PubMed:2181401).</text>
</comment>
<comment type="function">
    <molecule>Isoform E47</molecule>
    <text evidence="2">Facilitates ATOH7 binding to DNA at the consensus sequence 5'-CAGGTG-3', and positively regulates transcriptional activity.</text>
</comment>
<comment type="subunit">
    <text evidence="2 6 7 9 10 11 12 13 15 16 17 18 20">Homodimer (PubMed:12196028). Heterodimer; efficient DNA binding requires dimerization with another bHLH protein (PubMed:15226298). Forms a heterodimer with TWIST1 and TWIST2 (PubMed:23395635, PubMed:7589808). Forms a heterodimer with NEUROD1; the heterodimer is inhibited in presence of ID2, but not NR0B2, to E-box element (PubMed:18069799, PubMed:23395635). Forms a heterodimer with TCF15; the heterodimer binds E-box element (PubMed:15226298, PubMed:23395635). Forms a heterodimer with MYOG; heterodimerization enhances MYOG DNA-binding and transcriptional activities (PubMed:12196028). Forms a heterodimer with ATOH8; repress transcription of TCF3 and TCF3-NEUROG3 dimer-induced transactivation of E box-dependent promoters (PubMed:23938248). Component of a nuclear TAL-1 complex composed at least of CBFA2T3, LDB1, TAL1 and TCF3 (PubMed:16407974). Interacts with NEUROD2 (PubMed:18214987). Interacts with EP300 (By similarity). Interacts with PTF1A, TGFB1I1 and UBE2I (PubMed:11318877, PubMed:16291758, PubMed:9409784). Interacts with BHLHA9 (By similarity). Interacts with ASB2; the interaction is mediated by SKP2 and targets TCF3 for Notch-induced proteasomal degradation (By similarity). Interacts with transcription factor ASCL5/AmeloD.</text>
</comment>
<comment type="subunit">
    <molecule>Isoform E47</molecule>
    <text evidence="2">Forms a heterodimer with ATOH7; required for ATOH7 DNA-binding.</text>
</comment>
<comment type="subunit">
    <molecule>Isoform E12</molecule>
    <text evidence="2 8">Interacts with RALGAPA1 (PubMed:12200424). Interacts with FIGLA (By similarity).</text>
</comment>
<comment type="interaction">
    <interactant intactId="EBI-81370">
        <id>P15806</id>
    </interactant>
    <interactant intactId="EBI-81361">
        <id>Q64279</id>
        <label>Hand1</label>
    </interactant>
    <organismsDiffer>false</organismsDiffer>
    <experiments>2</experiments>
</comment>
<comment type="interaction">
    <interactant intactId="EBI-81370">
        <id>P15806</id>
    </interactant>
    <interactant intactId="EBI-81388">
        <id>Q61039</id>
        <label>Hand2</label>
    </interactant>
    <organismsDiffer>false</organismsDiffer>
    <experiments>2</experiments>
</comment>
<comment type="interaction">
    <interactant intactId="EBI-81370">
        <id>P15806</id>
    </interactant>
    <interactant intactId="EBI-309167">
        <id>P41136</id>
        <label>Id2</label>
    </interactant>
    <organismsDiffer>false</organismsDiffer>
    <experiments>2</experiments>
</comment>
<comment type="interaction">
    <interactant intactId="EBI-81370">
        <id>P15806</id>
    </interactant>
    <interactant intactId="EBI-8006437">
        <id>P22091</id>
        <label>Tal1</label>
    </interactant>
    <organismsDiffer>false</organismsDiffer>
    <experiments>4</experiments>
</comment>
<comment type="interaction">
    <interactant intactId="EBI-413585">
        <id>P15806-2</id>
    </interactant>
    <interactant intactId="EBI-309167">
        <id>P41136</id>
        <label>Id2</label>
    </interactant>
    <organismsDiffer>false</organismsDiffer>
    <experiments>6</experiments>
</comment>
<comment type="subcellular location">
    <subcellularLocation>
        <location evidence="8">Nucleus</location>
    </subcellularLocation>
</comment>
<comment type="alternative products">
    <event type="alternative splicing"/>
    <isoform>
        <id>P15806-1</id>
        <name>E12</name>
        <sequence type="displayed"/>
    </isoform>
    <isoform>
        <id>P15806-2</id>
        <name>E47</name>
        <sequence type="described" ref="VSP_011354"/>
    </isoform>
</comment>
<comment type="developmental stage">
    <text evidence="13">Expressed during the development of the nervous system.</text>
</comment>
<comment type="PTM">
    <text evidence="1">Phosphorylated following NGF stimulation.</text>
</comment>
<comment type="PTM">
    <text evidence="2">Undergoes Notch-induced ubiquitination and subsequent proteasomal degradation which is mediated by ASB1 or ASB2, the substrate-recognition components of probable ECS E3 ubiquitin-protein ligase complexes.</text>
</comment>
<comment type="disruption phenotype">
    <text evidence="13">Mice are smaller than their wild-type littermates and fail to thrive 14 days after birth.</text>
</comment>
<proteinExistence type="evidence at protein level"/>
<organism>
    <name type="scientific">Mus musculus</name>
    <name type="common">Mouse</name>
    <dbReference type="NCBI Taxonomy" id="10090"/>
    <lineage>
        <taxon>Eukaryota</taxon>
        <taxon>Metazoa</taxon>
        <taxon>Chordata</taxon>
        <taxon>Craniata</taxon>
        <taxon>Vertebrata</taxon>
        <taxon>Euteleostomi</taxon>
        <taxon>Mammalia</taxon>
        <taxon>Eutheria</taxon>
        <taxon>Euarchontoglires</taxon>
        <taxon>Glires</taxon>
        <taxon>Rodentia</taxon>
        <taxon>Myomorpha</taxon>
        <taxon>Muroidea</taxon>
        <taxon>Muridae</taxon>
        <taxon>Murinae</taxon>
        <taxon>Mus</taxon>
        <taxon>Mus</taxon>
    </lineage>
</organism>
<evidence type="ECO:0000250" key="1"/>
<evidence type="ECO:0000250" key="2">
    <source>
        <dbReference type="UniProtKB" id="P15923"/>
    </source>
</evidence>
<evidence type="ECO:0000255" key="3">
    <source>
        <dbReference type="PROSITE-ProRule" id="PRU00981"/>
    </source>
</evidence>
<evidence type="ECO:0000256" key="4">
    <source>
        <dbReference type="SAM" id="MobiDB-lite"/>
    </source>
</evidence>
<evidence type="ECO:0000269" key="5">
    <source>
    </source>
</evidence>
<evidence type="ECO:0000269" key="6">
    <source>
    </source>
</evidence>
<evidence type="ECO:0000269" key="7">
    <source>
    </source>
</evidence>
<evidence type="ECO:0000269" key="8">
    <source>
    </source>
</evidence>
<evidence type="ECO:0000269" key="9">
    <source>
    </source>
</evidence>
<evidence type="ECO:0000269" key="10">
    <source>
    </source>
</evidence>
<evidence type="ECO:0000269" key="11">
    <source>
    </source>
</evidence>
<evidence type="ECO:0000269" key="12">
    <source>
    </source>
</evidence>
<evidence type="ECO:0000269" key="13">
    <source>
    </source>
</evidence>
<evidence type="ECO:0000269" key="14">
    <source>
    </source>
</evidence>
<evidence type="ECO:0000269" key="15">
    <source>
    </source>
</evidence>
<evidence type="ECO:0000269" key="16">
    <source>
    </source>
</evidence>
<evidence type="ECO:0000269" key="17">
    <source>
    </source>
</evidence>
<evidence type="ECO:0000269" key="18">
    <source>
    </source>
</evidence>
<evidence type="ECO:0000269" key="19">
    <source>
    </source>
</evidence>
<evidence type="ECO:0000269" key="20">
    <source>
    </source>
</evidence>
<evidence type="ECO:0000303" key="21">
    <source>
    </source>
</evidence>
<evidence type="ECO:0000303" key="22">
    <source>
    </source>
</evidence>
<evidence type="ECO:0000303" key="23">
    <source>
    </source>
</evidence>
<evidence type="ECO:0000303" key="24">
    <source>
    </source>
</evidence>
<evidence type="ECO:0000305" key="25"/>
<evidence type="ECO:0007744" key="26">
    <source>
    </source>
</evidence>
<evidence type="ECO:0007744" key="27">
    <source>
    </source>
</evidence>
<evidence type="ECO:0007829" key="28">
    <source>
        <dbReference type="PDB" id="7WZ6"/>
    </source>
</evidence>
<reference key="1">
    <citation type="journal article" date="2001" name="J. Biol. Chem.">
        <title>A new role for E12/E47 in the repression of E-cadherin expression and epithelial-mesenchymal transitions.</title>
        <authorList>
            <person name="Perez-Moreno M.A."/>
            <person name="Locascio A."/>
            <person name="Rodrigo I."/>
            <person name="Dhondt G."/>
            <person name="Portillo F."/>
            <person name="Nieto M.A."/>
            <person name="Cano A."/>
        </authorList>
    </citation>
    <scope>NUCLEOTIDE SEQUENCE [MRNA] (ISOFORM E47)</scope>
    <scope>FUNCTION</scope>
    <source>
        <strain>NIH Swiss</strain>
    </source>
</reference>
<reference key="2">
    <citation type="journal article" date="2005" name="Science">
        <title>The transcriptional landscape of the mammalian genome.</title>
        <authorList>
            <person name="Carninci P."/>
            <person name="Kasukawa T."/>
            <person name="Katayama S."/>
            <person name="Gough J."/>
            <person name="Frith M.C."/>
            <person name="Maeda N."/>
            <person name="Oyama R."/>
            <person name="Ravasi T."/>
            <person name="Lenhard B."/>
            <person name="Wells C."/>
            <person name="Kodzius R."/>
            <person name="Shimokawa K."/>
            <person name="Bajic V.B."/>
            <person name="Brenner S.E."/>
            <person name="Batalov S."/>
            <person name="Forrest A.R."/>
            <person name="Zavolan M."/>
            <person name="Davis M.J."/>
            <person name="Wilming L.G."/>
            <person name="Aidinis V."/>
            <person name="Allen J.E."/>
            <person name="Ambesi-Impiombato A."/>
            <person name="Apweiler R."/>
            <person name="Aturaliya R.N."/>
            <person name="Bailey T.L."/>
            <person name="Bansal M."/>
            <person name="Baxter L."/>
            <person name="Beisel K.W."/>
            <person name="Bersano T."/>
            <person name="Bono H."/>
            <person name="Chalk A.M."/>
            <person name="Chiu K.P."/>
            <person name="Choudhary V."/>
            <person name="Christoffels A."/>
            <person name="Clutterbuck D.R."/>
            <person name="Crowe M.L."/>
            <person name="Dalla E."/>
            <person name="Dalrymple B.P."/>
            <person name="de Bono B."/>
            <person name="Della Gatta G."/>
            <person name="di Bernardo D."/>
            <person name="Down T."/>
            <person name="Engstrom P."/>
            <person name="Fagiolini M."/>
            <person name="Faulkner G."/>
            <person name="Fletcher C.F."/>
            <person name="Fukushima T."/>
            <person name="Furuno M."/>
            <person name="Futaki S."/>
            <person name="Gariboldi M."/>
            <person name="Georgii-Hemming P."/>
            <person name="Gingeras T.R."/>
            <person name="Gojobori T."/>
            <person name="Green R.E."/>
            <person name="Gustincich S."/>
            <person name="Harbers M."/>
            <person name="Hayashi Y."/>
            <person name="Hensch T.K."/>
            <person name="Hirokawa N."/>
            <person name="Hill D."/>
            <person name="Huminiecki L."/>
            <person name="Iacono M."/>
            <person name="Ikeo K."/>
            <person name="Iwama A."/>
            <person name="Ishikawa T."/>
            <person name="Jakt M."/>
            <person name="Kanapin A."/>
            <person name="Katoh M."/>
            <person name="Kawasawa Y."/>
            <person name="Kelso J."/>
            <person name="Kitamura H."/>
            <person name="Kitano H."/>
            <person name="Kollias G."/>
            <person name="Krishnan S.P."/>
            <person name="Kruger A."/>
            <person name="Kummerfeld S.K."/>
            <person name="Kurochkin I.V."/>
            <person name="Lareau L.F."/>
            <person name="Lazarevic D."/>
            <person name="Lipovich L."/>
            <person name="Liu J."/>
            <person name="Liuni S."/>
            <person name="McWilliam S."/>
            <person name="Madan Babu M."/>
            <person name="Madera M."/>
            <person name="Marchionni L."/>
            <person name="Matsuda H."/>
            <person name="Matsuzawa S."/>
            <person name="Miki H."/>
            <person name="Mignone F."/>
            <person name="Miyake S."/>
            <person name="Morris K."/>
            <person name="Mottagui-Tabar S."/>
            <person name="Mulder N."/>
            <person name="Nakano N."/>
            <person name="Nakauchi H."/>
            <person name="Ng P."/>
            <person name="Nilsson R."/>
            <person name="Nishiguchi S."/>
            <person name="Nishikawa S."/>
            <person name="Nori F."/>
            <person name="Ohara O."/>
            <person name="Okazaki Y."/>
            <person name="Orlando V."/>
            <person name="Pang K.C."/>
            <person name="Pavan W.J."/>
            <person name="Pavesi G."/>
            <person name="Pesole G."/>
            <person name="Petrovsky N."/>
            <person name="Piazza S."/>
            <person name="Reed J."/>
            <person name="Reid J.F."/>
            <person name="Ring B.Z."/>
            <person name="Ringwald M."/>
            <person name="Rost B."/>
            <person name="Ruan Y."/>
            <person name="Salzberg S.L."/>
            <person name="Sandelin A."/>
            <person name="Schneider C."/>
            <person name="Schoenbach C."/>
            <person name="Sekiguchi K."/>
            <person name="Semple C.A."/>
            <person name="Seno S."/>
            <person name="Sessa L."/>
            <person name="Sheng Y."/>
            <person name="Shibata Y."/>
            <person name="Shimada H."/>
            <person name="Shimada K."/>
            <person name="Silva D."/>
            <person name="Sinclair B."/>
            <person name="Sperling S."/>
            <person name="Stupka E."/>
            <person name="Sugiura K."/>
            <person name="Sultana R."/>
            <person name="Takenaka Y."/>
            <person name="Taki K."/>
            <person name="Tammoja K."/>
            <person name="Tan S.L."/>
            <person name="Tang S."/>
            <person name="Taylor M.S."/>
            <person name="Tegner J."/>
            <person name="Teichmann S.A."/>
            <person name="Ueda H.R."/>
            <person name="van Nimwegen E."/>
            <person name="Verardo R."/>
            <person name="Wei C.L."/>
            <person name="Yagi K."/>
            <person name="Yamanishi H."/>
            <person name="Zabarovsky E."/>
            <person name="Zhu S."/>
            <person name="Zimmer A."/>
            <person name="Hide W."/>
            <person name="Bult C."/>
            <person name="Grimmond S.M."/>
            <person name="Teasdale R.D."/>
            <person name="Liu E.T."/>
            <person name="Brusic V."/>
            <person name="Quackenbush J."/>
            <person name="Wahlestedt C."/>
            <person name="Mattick J.S."/>
            <person name="Hume D.A."/>
            <person name="Kai C."/>
            <person name="Sasaki D."/>
            <person name="Tomaru Y."/>
            <person name="Fukuda S."/>
            <person name="Kanamori-Katayama M."/>
            <person name="Suzuki M."/>
            <person name="Aoki J."/>
            <person name="Arakawa T."/>
            <person name="Iida J."/>
            <person name="Imamura K."/>
            <person name="Itoh M."/>
            <person name="Kato T."/>
            <person name="Kawaji H."/>
            <person name="Kawagashira N."/>
            <person name="Kawashima T."/>
            <person name="Kojima M."/>
            <person name="Kondo S."/>
            <person name="Konno H."/>
            <person name="Nakano K."/>
            <person name="Ninomiya N."/>
            <person name="Nishio T."/>
            <person name="Okada M."/>
            <person name="Plessy C."/>
            <person name="Shibata K."/>
            <person name="Shiraki T."/>
            <person name="Suzuki S."/>
            <person name="Tagami M."/>
            <person name="Waki K."/>
            <person name="Watahiki A."/>
            <person name="Okamura-Oho Y."/>
            <person name="Suzuki H."/>
            <person name="Kawai J."/>
            <person name="Hayashizaki Y."/>
        </authorList>
    </citation>
    <scope>NUCLEOTIDE SEQUENCE [LARGE SCALE MRNA] (ISOFORMS E12 AND E47)</scope>
    <source>
        <strain>C57BL/6J</strain>
        <strain>NOD</strain>
        <tissue>Hypothalamus</tissue>
        <tissue>Spleen</tissue>
    </source>
</reference>
<reference key="3">
    <citation type="journal article" date="2004" name="Genome Res.">
        <title>The status, quality, and expansion of the NIH full-length cDNA project: the Mammalian Gene Collection (MGC).</title>
        <authorList>
            <consortium name="The MGC Project Team"/>
        </authorList>
    </citation>
    <scope>NUCLEOTIDE SEQUENCE [LARGE SCALE MRNA] (ISOFORMS E12 AND E47)</scope>
    <source>
        <strain>FVB/N</strain>
        <tissue>Mammary tumor</tissue>
        <tissue>Salivary gland</tissue>
    </source>
</reference>
<reference key="4">
    <citation type="journal article" date="1990" name="Nucleic Acids Res.">
        <title>A cDNA from a mouse pancreatic beta cell encoding a putative transcription factor of the insulin gene.</title>
        <authorList>
            <person name="Walker M.D."/>
            <person name="Park C.W."/>
            <person name="Rosen A."/>
            <person name="Aronheim A."/>
        </authorList>
    </citation>
    <scope>NUCLEOTIDE SEQUENCE [MRNA] OF 369-651 (ISOFORM E47)</scope>
    <scope>FUNCTION</scope>
    <source>
        <tissue>Pancreas</tissue>
    </source>
</reference>
<reference key="5">
    <citation type="journal article" date="1994" name="Gene">
        <title>Identification of amino-acid polymorphism within the leucine zipper motif of mouse transcription factor A1.</title>
        <authorList>
            <person name="Kajimoto Y."/>
            <person name="Kawamori R."/>
            <person name="Umayahara Y."/>
            <person name="Watada H."/>
            <person name="Iwama N."/>
            <person name="Morishima T."/>
            <person name="Yamasaki Y."/>
            <person name="Kamada T."/>
        </authorList>
    </citation>
    <scope>NUCLEOTIDE SEQUENCE [MRNA] OF 386-493</scope>
    <scope>VARIANT GLN-387 INS</scope>
    <source>
        <tissue>Adipocyte</tissue>
    </source>
</reference>
<reference key="6">
    <citation type="journal article" date="1995" name="Gene">
        <title>Ubiquitous, but variable, expression of two alternatively spliced mRNAs encoding mouse homologues of transcription factors E47 and E12.</title>
        <authorList>
            <person name="Watada H."/>
            <person name="Kajimoto Y."/>
            <person name="Umayahara Y."/>
            <person name="Matsuoka T."/>
            <person name="Morishima T."/>
            <person name="Yamasaki Y."/>
            <person name="Kawamori R."/>
            <person name="Kamada T."/>
        </authorList>
    </citation>
    <scope>NUCLEOTIDE SEQUENCE [MRNA] OF 485-651 (ISOFORM E12)</scope>
    <source>
        <strain>C57BL/6J</strain>
    </source>
</reference>
<reference key="7">
    <citation type="journal article" date="1995" name="Dev. Biol.">
        <title>Dermo-1: a novel twist-related bHLH protein expressed in the developing dermis.</title>
        <authorList>
            <person name="Li L."/>
            <person name="Cserjesi P."/>
            <person name="Olson E.N."/>
        </authorList>
    </citation>
    <scope>INTERACTION WITH TWIST2</scope>
    <source>
        <strain>SWR/J</strain>
        <tissue>Brain</tissue>
        <tissue>Embryonic head</tissue>
    </source>
</reference>
<reference key="8">
    <citation type="journal article" date="1997" name="Gene">
        <title>The mUBC9 murine ubiquitin conjugating enzyme interacts with the E2A transcription factors.</title>
        <authorList>
            <person name="Loveys D.A."/>
            <person name="Streiff M.B."/>
            <person name="Schaefer T.S."/>
            <person name="Kato G.J."/>
        </authorList>
    </citation>
    <scope>INTERACTION WITH UBE2I</scope>
</reference>
<reference key="9">
    <citation type="journal article" date="2001" name="Genes Cells">
        <title>p48 subunit of mouse PTF1 binds to RBP-Jkappa/CBF-1, the intracellular mediator of Notch signalling, and is expressed in the neural tube of early stage embryos.</title>
        <authorList>
            <person name="Obata J."/>
            <person name="Yano M."/>
            <person name="Mimura H."/>
            <person name="Goto T."/>
            <person name="Nakayama R."/>
            <person name="Mibu Y."/>
            <person name="Oka C."/>
            <person name="Kawaichi M."/>
        </authorList>
    </citation>
    <scope>INTERACTION WITH PTF1A</scope>
</reference>
<reference key="10">
    <citation type="journal article" date="2002" name="Biochemistry">
        <title>Analysis of the DNA-binding properties of MyoD, myogenin, and E12 by fluorescence anisotropy.</title>
        <authorList>
            <person name="Maleki S.J."/>
            <person name="Royer C.A."/>
            <person name="Hurlburt B.K."/>
        </authorList>
    </citation>
    <scope>SUBUNIT</scope>
</reference>
<reference key="11">
    <citation type="journal article" date="2002" name="J. Biol. Chem.">
        <title>Cloning and characterization of GRIPE, a novel interacting partner of the transcription factor E12 in developing mouse forebrain.</title>
        <authorList>
            <person name="Heng J.I.T."/>
            <person name="Tan S.-S."/>
        </authorList>
    </citation>
    <scope>INTERACTION WITH RALGAPA1</scope>
    <scope>SUBCELLULAR LOCATION</scope>
</reference>
<reference key="12">
    <citation type="journal article" date="2004" name="J. Biol. Chem.">
        <title>Paraxis is a basic helix-loop-helix protein that positively regulates transcription through binding to specific E-box elements.</title>
        <authorList>
            <person name="Wilson-Rawls J."/>
            <person name="Rhee J.M."/>
            <person name="Rawls A."/>
        </authorList>
    </citation>
    <scope>FUNCTION</scope>
    <scope>DNA-BINDING</scope>
    <scope>INTERACTION WITH TCF15</scope>
</reference>
<reference key="13">
    <citation type="journal article" date="2006" name="EMBO J.">
        <title>ETO2 coordinates cellular proliferation and differentiation during erythropoiesis.</title>
        <authorList>
            <person name="Goardon N."/>
            <person name="Lambert J.A."/>
            <person name="Rodriguez P."/>
            <person name="Nissaire P."/>
            <person name="Herblot S."/>
            <person name="Thibault P."/>
            <person name="Dumenil D."/>
            <person name="Strouboulis J."/>
            <person name="Romeo P.-H."/>
            <person name="Hoang T."/>
        </authorList>
    </citation>
    <scope>IDENTIFICATION IN A NUCLEAR TAL-1 COMPLEX</scope>
</reference>
<reference key="14">
    <citation type="journal article" date="2006" name="J. Biol. Chem.">
        <title>HIC-5 is a novel repressor of lymphoid enhancer factor/T-cell factor-driven transcription.</title>
        <authorList>
            <person name="Ghogomu S.M."/>
            <person name="van Venrooy S."/>
            <person name="Ritthaler M."/>
            <person name="Wedlich D."/>
            <person name="Gradl D."/>
        </authorList>
    </citation>
    <scope>INTERACTION WITH TGFB1I1</scope>
</reference>
<reference key="15">
    <citation type="journal article" date="2008" name="J. Neurosci. Res.">
        <title>E protein dosage influences brain development more than family member identity.</title>
        <authorList>
            <person name="Ravanpay A.C."/>
            <person name="Olson J.M."/>
        </authorList>
    </citation>
    <scope>FUNCTION</scope>
    <scope>INTERACTION WITH NEUROD2</scope>
    <scope>DNA-BINDING</scope>
    <scope>DISRUPTION PHENOTYPE</scope>
    <scope>DEVELOPMENTAL STAGE</scope>
</reference>
<reference key="16">
    <citation type="journal article" date="2010" name="Cell">
        <title>A tissue-specific atlas of mouse protein phosphorylation and expression.</title>
        <authorList>
            <person name="Huttlin E.L."/>
            <person name="Jedrychowski M.P."/>
            <person name="Elias J.E."/>
            <person name="Goswami T."/>
            <person name="Rad R."/>
            <person name="Beausoleil S.A."/>
            <person name="Villen J."/>
            <person name="Haas W."/>
            <person name="Sowa M.E."/>
            <person name="Gygi S.P."/>
        </authorList>
    </citation>
    <scope>PHOSPHORYLATION [LARGE SCALE ANALYSIS] AT THR-353 AND SER-357</scope>
    <scope>PHOSPHORYLATION [LARGE SCALE ANALYSIS] AT THR-528 AND SER-533 (ISOFORM E47)</scope>
    <scope>IDENTIFICATION BY MASS SPECTROMETRY [LARGE SCALE ANALYSIS]</scope>
    <source>
        <tissue>Kidney</tissue>
        <tissue>Lung</tissue>
        <tissue>Spleen</tissue>
    </source>
</reference>
<reference key="17">
    <citation type="journal article" date="2013" name="Biochim. Biophys. Acta">
        <title>Characterization of the transcriptional activity of the basic helix-loop-helix (bHLH) transcription factor Atoh8.</title>
        <authorList>
            <person name="Ejarque M."/>
            <person name="Altirriba J."/>
            <person name="Gomis R."/>
            <person name="Gasa R."/>
        </authorList>
    </citation>
    <scope>INTERACTION WITH ATOH8</scope>
</reference>
<reference key="18">
    <citation type="journal article" date="2013" name="Cell Rep.">
        <title>Tcf15 primes pluripotent cells for differentiation.</title>
        <authorList>
            <person name="Davies O.R."/>
            <person name="Lin C.Y."/>
            <person name="Radzisheuskaya A."/>
            <person name="Zhou X."/>
            <person name="Taube J."/>
            <person name="Blin G."/>
            <person name="Waterhouse A."/>
            <person name="Smith A.J."/>
            <person name="Lowell S."/>
        </authorList>
    </citation>
    <scope>INTERACTION WITH TCF15; NEUROD1 AND TWIST1</scope>
</reference>
<reference key="19">
    <citation type="journal article" date="2014" name="Mol. Cell. Proteomics">
        <title>Immunoaffinity enrichment and mass spectrometry analysis of protein methylation.</title>
        <authorList>
            <person name="Guo A."/>
            <person name="Gu H."/>
            <person name="Zhou J."/>
            <person name="Mulhern D."/>
            <person name="Wang Y."/>
            <person name="Lee K.A."/>
            <person name="Yang V."/>
            <person name="Aguiar M."/>
            <person name="Kornhauser J."/>
            <person name="Jia X."/>
            <person name="Ren J."/>
            <person name="Beausoleil S.A."/>
            <person name="Silva J.C."/>
            <person name="Vemulapalli V."/>
            <person name="Bedford M.T."/>
            <person name="Comb M.J."/>
        </authorList>
    </citation>
    <scope>METHYLATION [LARGE SCALE ANALYSIS] AT ARG-369</scope>
    <scope>IDENTIFICATION BY MASS SPECTROMETRY [LARGE SCALE ANALYSIS]</scope>
    <source>
        <tissue>Embryo</tissue>
    </source>
</reference>
<reference evidence="25" key="20">
    <citation type="journal article" date="2019" name="J. Dent. Res.">
        <title>Identification of the Novel Tooth-Specific Transcription Factor AmeloD.</title>
        <authorList>
            <person name="He B."/>
            <person name="Chiba Y."/>
            <person name="Li H."/>
            <person name="de Vega S."/>
            <person name="Tanaka K."/>
            <person name="Yoshizaki K."/>
            <person name="Ishijima M."/>
            <person name="Yuasa K."/>
            <person name="Ishikawa M."/>
            <person name="Rhodes C."/>
            <person name="Sakai K."/>
            <person name="Zhang P."/>
            <person name="Fukumoto S."/>
            <person name="Zhou X."/>
            <person name="Yamada Y."/>
        </authorList>
    </citation>
    <scope>FUNCTION</scope>
    <scope>INTERACTION WITH ASCL5</scope>
</reference>
<reference key="21">
    <citation type="journal article" date="2008" name="Biochemistry">
        <title>Crystal structure of E47-NeuroD1/beta2 bHLH domain-DNA complex: heterodimer selectivity and DNA recognition.</title>
        <authorList>
            <person name="Longo A."/>
            <person name="Guanga G.P."/>
            <person name="Rose R.B."/>
        </authorList>
    </citation>
    <scope>X-RAY CRYSTALLOGRAPHY (2.5 ANGSTROMS) OF 547-606 IN COMPLEX WITH NEUROD1 AND PROMOTER E-BOX DNA SEQUENCE</scope>
    <scope>SUBUNIT</scope>
</reference>
<gene>
    <name type="primary">Tcf3</name>
    <name type="synonym">Alf2</name>
    <name type="synonym">Me2</name>
    <name type="synonym">Tcfe2a</name>
</gene>
<accession>P15806</accession>
<accession>Q3U153</accession>
<accession>Q8CAH9</accession>
<accession>Q8VCY4</accession>
<accession>Q922S2</accession>
<accession>Q99MB8</accession>
<accession>Q9CYJ4</accession>